<organism>
    <name type="scientific">Staphylococcus aureus (strain MSSA476)</name>
    <dbReference type="NCBI Taxonomy" id="282459"/>
    <lineage>
        <taxon>Bacteria</taxon>
        <taxon>Bacillati</taxon>
        <taxon>Bacillota</taxon>
        <taxon>Bacilli</taxon>
        <taxon>Bacillales</taxon>
        <taxon>Staphylococcaceae</taxon>
        <taxon>Staphylococcus</taxon>
    </lineage>
</organism>
<sequence length="557" mass="62388">MALSTFKREHIKKNLRNDEYDLVIIGGGITGAGIALDASERGMKVALVEMQDFAQGTSSRSTKLVHGGLRYLKQFQIGVVAETGKERAIVYENGPHVTTPEWMLLPMHKGGTFGKFSTSIGLGMYDRLAGVKKSERKKMLSKKETLAKEPLVKKEGLKGGGYYVEYRTDDARLTIEVMKRAAEKGAEIINYTKSEHFTYDKNQQVNGVKVIDKLTNENYTIKAKKVVNAAGPWVDDVRSGDYARNNKKLRLTKGVHVVIDQSKFPLGQAVYFDTEKDGRMIFAIPREGKAYVGTTDTFYDNIKSSPLTTQEDRDYLIDAINYMFPSVNVTDEDIESTWAGIRPLIYEEGKDPSEISRKDEIWEGKSGLLTIAGGKLTGYRHMAQDIVDLVSKRLKKDYGLTFSPCNTKGLAISGGDVGGSKNFDAFVEQKVDVAKGFGIDEDVARRLASKYGSNVDELFNIAQTSQYHDSKLPLEIYVELVYSIQQEMVYKPNDFLVRRSGKMYFNIKDVLDYKDAVIDIMADMLDYSPAQIEAYTEEVEQAIKEAQHGNNQPAVKE</sequence>
<protein>
    <recommendedName>
        <fullName>Aerobic glycerol-3-phosphate dehydrogenase</fullName>
        <ecNumber>1.1.5.3</ecNumber>
    </recommendedName>
</protein>
<comment type="catalytic activity">
    <reaction>
        <text>a quinone + sn-glycerol 3-phosphate = dihydroxyacetone phosphate + a quinol</text>
        <dbReference type="Rhea" id="RHEA:18977"/>
        <dbReference type="ChEBI" id="CHEBI:24646"/>
        <dbReference type="ChEBI" id="CHEBI:57597"/>
        <dbReference type="ChEBI" id="CHEBI:57642"/>
        <dbReference type="ChEBI" id="CHEBI:132124"/>
        <dbReference type="EC" id="1.1.5.3"/>
    </reaction>
</comment>
<comment type="cofactor">
    <cofactor evidence="1">
        <name>FAD</name>
        <dbReference type="ChEBI" id="CHEBI:57692"/>
    </cofactor>
</comment>
<comment type="pathway">
    <text>Polyol metabolism; glycerol degradation via glycerol kinase pathway; glycerone phosphate from sn-glycerol 3-phosphate (aerobic route): step 1/1.</text>
</comment>
<comment type="subcellular location">
    <subcellularLocation>
        <location evidence="1">Cytoplasm</location>
    </subcellularLocation>
</comment>
<comment type="similarity">
    <text evidence="3">Belongs to the FAD-dependent glycerol-3-phosphate dehydrogenase family.</text>
</comment>
<comment type="sequence caution" evidence="3">
    <conflict type="erroneous initiation">
        <sequence resource="EMBL-CDS" id="CAG43012"/>
    </conflict>
</comment>
<keyword id="KW-0963">Cytoplasm</keyword>
<keyword id="KW-0274">FAD</keyword>
<keyword id="KW-0285">Flavoprotein</keyword>
<keyword id="KW-0319">Glycerol metabolism</keyword>
<keyword id="KW-0560">Oxidoreductase</keyword>
<gene>
    <name type="primary">glpD</name>
    <name type="ordered locus">SAS1234</name>
</gene>
<evidence type="ECO:0000250" key="1"/>
<evidence type="ECO:0000255" key="2"/>
<evidence type="ECO:0000305" key="3"/>
<accession>Q6G9R2</accession>
<name>GLPD_STAAS</name>
<feature type="chain" id="PRO_0000270063" description="Aerobic glycerol-3-phosphate dehydrogenase">
    <location>
        <begin position="1"/>
        <end position="557"/>
    </location>
</feature>
<feature type="binding site" evidence="2">
    <location>
        <begin position="21"/>
        <end position="49"/>
    </location>
    <ligand>
        <name>FAD</name>
        <dbReference type="ChEBI" id="CHEBI:57692"/>
    </ligand>
</feature>
<dbReference type="EC" id="1.1.5.3"/>
<dbReference type="EMBL" id="BX571857">
    <property type="protein sequence ID" value="CAG43012.1"/>
    <property type="status" value="ALT_INIT"/>
    <property type="molecule type" value="Genomic_DNA"/>
</dbReference>
<dbReference type="RefSeq" id="WP_001218596.1">
    <property type="nucleotide sequence ID" value="NC_002953.3"/>
</dbReference>
<dbReference type="SMR" id="Q6G9R2"/>
<dbReference type="KEGG" id="sas:SAS1234"/>
<dbReference type="HOGENOM" id="CLU_015740_5_2_9"/>
<dbReference type="UniPathway" id="UPA00618">
    <property type="reaction ID" value="UER00674"/>
</dbReference>
<dbReference type="GO" id="GO:0005737">
    <property type="term" value="C:cytoplasm"/>
    <property type="evidence" value="ECO:0007669"/>
    <property type="project" value="UniProtKB-SubCell"/>
</dbReference>
<dbReference type="GO" id="GO:0004368">
    <property type="term" value="F:glycerol-3-phosphate dehydrogenase (quinone) activity"/>
    <property type="evidence" value="ECO:0007669"/>
    <property type="project" value="UniProtKB-EC"/>
</dbReference>
<dbReference type="GO" id="GO:0019563">
    <property type="term" value="P:glycerol catabolic process"/>
    <property type="evidence" value="ECO:0007669"/>
    <property type="project" value="UniProtKB-UniPathway"/>
</dbReference>
<dbReference type="GO" id="GO:0046168">
    <property type="term" value="P:glycerol-3-phosphate catabolic process"/>
    <property type="evidence" value="ECO:0007669"/>
    <property type="project" value="TreeGrafter"/>
</dbReference>
<dbReference type="Gene3D" id="1.10.8.870">
    <property type="entry name" value="Alpha-glycerophosphate oxidase, cap domain"/>
    <property type="match status" value="1"/>
</dbReference>
<dbReference type="Gene3D" id="3.30.9.10">
    <property type="entry name" value="D-Amino Acid Oxidase, subunit A, domain 2"/>
    <property type="match status" value="1"/>
</dbReference>
<dbReference type="Gene3D" id="3.50.50.60">
    <property type="entry name" value="FAD/NAD(P)-binding domain"/>
    <property type="match status" value="1"/>
</dbReference>
<dbReference type="InterPro" id="IPR031656">
    <property type="entry name" value="DAO_C"/>
</dbReference>
<dbReference type="InterPro" id="IPR038299">
    <property type="entry name" value="DAO_C_sf"/>
</dbReference>
<dbReference type="InterPro" id="IPR006076">
    <property type="entry name" value="FAD-dep_OxRdtase"/>
</dbReference>
<dbReference type="InterPro" id="IPR036188">
    <property type="entry name" value="FAD/NAD-bd_sf"/>
</dbReference>
<dbReference type="InterPro" id="IPR000447">
    <property type="entry name" value="G3P_DH_FAD-dep"/>
</dbReference>
<dbReference type="PANTHER" id="PTHR11985:SF35">
    <property type="entry name" value="ANAEROBIC GLYCEROL-3-PHOSPHATE DEHYDROGENASE SUBUNIT A"/>
    <property type="match status" value="1"/>
</dbReference>
<dbReference type="PANTHER" id="PTHR11985">
    <property type="entry name" value="GLYCEROL-3-PHOSPHATE DEHYDROGENASE"/>
    <property type="match status" value="1"/>
</dbReference>
<dbReference type="Pfam" id="PF01266">
    <property type="entry name" value="DAO"/>
    <property type="match status" value="1"/>
</dbReference>
<dbReference type="Pfam" id="PF16901">
    <property type="entry name" value="DAO_C"/>
    <property type="match status" value="1"/>
</dbReference>
<dbReference type="PRINTS" id="PR01001">
    <property type="entry name" value="FADG3PDH"/>
</dbReference>
<dbReference type="SUPFAM" id="SSF54373">
    <property type="entry name" value="FAD-linked reductases, C-terminal domain"/>
    <property type="match status" value="1"/>
</dbReference>
<dbReference type="SUPFAM" id="SSF51905">
    <property type="entry name" value="FAD/NAD(P)-binding domain"/>
    <property type="match status" value="1"/>
</dbReference>
<dbReference type="PROSITE" id="PS00977">
    <property type="entry name" value="FAD_G3PDH_1"/>
    <property type="match status" value="1"/>
</dbReference>
<dbReference type="PROSITE" id="PS00978">
    <property type="entry name" value="FAD_G3PDH_2"/>
    <property type="match status" value="1"/>
</dbReference>
<proteinExistence type="inferred from homology"/>
<reference key="1">
    <citation type="journal article" date="2004" name="Proc. Natl. Acad. Sci. U.S.A.">
        <title>Complete genomes of two clinical Staphylococcus aureus strains: evidence for the rapid evolution of virulence and drug resistance.</title>
        <authorList>
            <person name="Holden M.T.G."/>
            <person name="Feil E.J."/>
            <person name="Lindsay J.A."/>
            <person name="Peacock S.J."/>
            <person name="Day N.P.J."/>
            <person name="Enright M.C."/>
            <person name="Foster T.J."/>
            <person name="Moore C.E."/>
            <person name="Hurst L."/>
            <person name="Atkin R."/>
            <person name="Barron A."/>
            <person name="Bason N."/>
            <person name="Bentley S.D."/>
            <person name="Chillingworth C."/>
            <person name="Chillingworth T."/>
            <person name="Churcher C."/>
            <person name="Clark L."/>
            <person name="Corton C."/>
            <person name="Cronin A."/>
            <person name="Doggett J."/>
            <person name="Dowd L."/>
            <person name="Feltwell T."/>
            <person name="Hance Z."/>
            <person name="Harris B."/>
            <person name="Hauser H."/>
            <person name="Holroyd S."/>
            <person name="Jagels K."/>
            <person name="James K.D."/>
            <person name="Lennard N."/>
            <person name="Line A."/>
            <person name="Mayes R."/>
            <person name="Moule S."/>
            <person name="Mungall K."/>
            <person name="Ormond D."/>
            <person name="Quail M.A."/>
            <person name="Rabbinowitsch E."/>
            <person name="Rutherford K.M."/>
            <person name="Sanders M."/>
            <person name="Sharp S."/>
            <person name="Simmonds M."/>
            <person name="Stevens K."/>
            <person name="Whitehead S."/>
            <person name="Barrell B.G."/>
            <person name="Spratt B.G."/>
            <person name="Parkhill J."/>
        </authorList>
    </citation>
    <scope>NUCLEOTIDE SEQUENCE [LARGE SCALE GENOMIC DNA]</scope>
    <source>
        <strain>MSSA476</strain>
    </source>
</reference>